<proteinExistence type="inferred from homology"/>
<feature type="chain" id="PRO_1000021915" description="NAD-capped RNA hydrolase NudC">
    <location>
        <begin position="1"/>
        <end position="257"/>
    </location>
</feature>
<feature type="domain" description="Nudix hydrolase" evidence="1">
    <location>
        <begin position="125"/>
        <end position="248"/>
    </location>
</feature>
<feature type="short sequence motif" description="Nudix box" evidence="1">
    <location>
        <begin position="159"/>
        <end position="180"/>
    </location>
</feature>
<feature type="binding site" evidence="1">
    <location>
        <position position="25"/>
    </location>
    <ligand>
        <name>substrate</name>
    </ligand>
</feature>
<feature type="binding site" evidence="1">
    <location>
        <position position="69"/>
    </location>
    <ligand>
        <name>substrate</name>
    </ligand>
</feature>
<feature type="binding site" evidence="1">
    <location>
        <position position="98"/>
    </location>
    <ligand>
        <name>Zn(2+)</name>
        <dbReference type="ChEBI" id="CHEBI:29105"/>
    </ligand>
</feature>
<feature type="binding site" evidence="1">
    <location>
        <position position="101"/>
    </location>
    <ligand>
        <name>Zn(2+)</name>
        <dbReference type="ChEBI" id="CHEBI:29105"/>
    </ligand>
</feature>
<feature type="binding site" evidence="1">
    <location>
        <position position="111"/>
    </location>
    <ligand>
        <name>substrate</name>
    </ligand>
</feature>
<feature type="binding site" evidence="1">
    <location>
        <position position="116"/>
    </location>
    <ligand>
        <name>Zn(2+)</name>
        <dbReference type="ChEBI" id="CHEBI:29105"/>
    </ligand>
</feature>
<feature type="binding site" evidence="1">
    <location>
        <position position="119"/>
    </location>
    <ligand>
        <name>Zn(2+)</name>
        <dbReference type="ChEBI" id="CHEBI:29105"/>
    </ligand>
</feature>
<feature type="binding site" evidence="1">
    <location>
        <position position="124"/>
    </location>
    <ligand>
        <name>substrate</name>
    </ligand>
</feature>
<feature type="binding site" evidence="1">
    <location>
        <position position="158"/>
    </location>
    <ligand>
        <name>a divalent metal cation</name>
        <dbReference type="ChEBI" id="CHEBI:60240"/>
        <label>1</label>
    </ligand>
</feature>
<feature type="binding site" evidence="1">
    <location>
        <position position="174"/>
    </location>
    <ligand>
        <name>a divalent metal cation</name>
        <dbReference type="ChEBI" id="CHEBI:60240"/>
        <label>2</label>
    </ligand>
</feature>
<feature type="binding site" evidence="1">
    <location>
        <position position="174"/>
    </location>
    <ligand>
        <name>a divalent metal cation</name>
        <dbReference type="ChEBI" id="CHEBI:60240"/>
        <label>3</label>
    </ligand>
</feature>
<feature type="binding site" evidence="1">
    <location>
        <position position="178"/>
    </location>
    <ligand>
        <name>a divalent metal cation</name>
        <dbReference type="ChEBI" id="CHEBI:60240"/>
        <label>1</label>
    </ligand>
</feature>
<feature type="binding site" evidence="1">
    <location>
        <position position="178"/>
    </location>
    <ligand>
        <name>a divalent metal cation</name>
        <dbReference type="ChEBI" id="CHEBI:60240"/>
        <label>3</label>
    </ligand>
</feature>
<feature type="binding site" evidence="1">
    <location>
        <begin position="192"/>
        <end position="199"/>
    </location>
    <ligand>
        <name>substrate</name>
    </ligand>
</feature>
<feature type="binding site" evidence="1">
    <location>
        <position position="219"/>
    </location>
    <ligand>
        <name>a divalent metal cation</name>
        <dbReference type="ChEBI" id="CHEBI:60240"/>
        <label>1</label>
    </ligand>
</feature>
<feature type="binding site" evidence="1">
    <location>
        <position position="219"/>
    </location>
    <ligand>
        <name>a divalent metal cation</name>
        <dbReference type="ChEBI" id="CHEBI:60240"/>
        <label>3</label>
    </ligand>
</feature>
<feature type="binding site" evidence="1">
    <location>
        <position position="241"/>
    </location>
    <ligand>
        <name>substrate</name>
    </ligand>
</feature>
<accession>Q0SY04</accession>
<gene>
    <name evidence="1" type="primary">nudC</name>
    <name type="ordered locus">SFV_4068</name>
</gene>
<comment type="function">
    <text evidence="1">mRNA decapping enzyme that specifically removes the nicotinamide adenine dinucleotide (NAD) cap from a subset of mRNAs by hydrolyzing the diphosphate linkage to produce nicotinamide mononucleotide (NMN) and 5' monophosphate mRNA. The NAD-cap is present at the 5'-end of some mRNAs and stabilizes RNA against 5'-processing. Has preference for mRNAs with a 5'-end purine. Catalyzes the hydrolysis of a broad range of dinucleotide pyrophosphates.</text>
</comment>
<comment type="catalytic activity">
    <reaction evidence="1">
        <text>a 5'-end NAD(+)-phospho-ribonucleoside in mRNA + H2O = a 5'-end phospho-adenosine-phospho-ribonucleoside in mRNA + beta-nicotinamide D-ribonucleotide + 2 H(+)</text>
        <dbReference type="Rhea" id="RHEA:60876"/>
        <dbReference type="Rhea" id="RHEA-COMP:15698"/>
        <dbReference type="Rhea" id="RHEA-COMP:15719"/>
        <dbReference type="ChEBI" id="CHEBI:14649"/>
        <dbReference type="ChEBI" id="CHEBI:15377"/>
        <dbReference type="ChEBI" id="CHEBI:15378"/>
        <dbReference type="ChEBI" id="CHEBI:144029"/>
        <dbReference type="ChEBI" id="CHEBI:144051"/>
    </reaction>
    <physiologicalReaction direction="left-to-right" evidence="1">
        <dbReference type="Rhea" id="RHEA:60877"/>
    </physiologicalReaction>
</comment>
<comment type="catalytic activity">
    <reaction evidence="1">
        <text>NAD(+) + H2O = beta-nicotinamide D-ribonucleotide + AMP + 2 H(+)</text>
        <dbReference type="Rhea" id="RHEA:11800"/>
        <dbReference type="ChEBI" id="CHEBI:14649"/>
        <dbReference type="ChEBI" id="CHEBI:15377"/>
        <dbReference type="ChEBI" id="CHEBI:15378"/>
        <dbReference type="ChEBI" id="CHEBI:57540"/>
        <dbReference type="ChEBI" id="CHEBI:456215"/>
        <dbReference type="EC" id="3.6.1.22"/>
    </reaction>
</comment>
<comment type="catalytic activity">
    <reaction evidence="1">
        <text>NADH + H2O = reduced beta-nicotinamide D-ribonucleotide + AMP + 2 H(+)</text>
        <dbReference type="Rhea" id="RHEA:48868"/>
        <dbReference type="ChEBI" id="CHEBI:15377"/>
        <dbReference type="ChEBI" id="CHEBI:15378"/>
        <dbReference type="ChEBI" id="CHEBI:57945"/>
        <dbReference type="ChEBI" id="CHEBI:90832"/>
        <dbReference type="ChEBI" id="CHEBI:456215"/>
        <dbReference type="EC" id="3.6.1.22"/>
    </reaction>
</comment>
<comment type="cofactor">
    <cofactor evidence="1">
        <name>Mg(2+)</name>
        <dbReference type="ChEBI" id="CHEBI:18420"/>
    </cofactor>
    <cofactor evidence="1">
        <name>Mn(2+)</name>
        <dbReference type="ChEBI" id="CHEBI:29035"/>
    </cofactor>
    <text evidence="1">Divalent metal cations. Mg(2+) or Mn(2+).</text>
</comment>
<comment type="cofactor">
    <cofactor evidence="1">
        <name>Zn(2+)</name>
        <dbReference type="ChEBI" id="CHEBI:29105"/>
    </cofactor>
    <text evidence="1">Binds 1 zinc ion per subunit.</text>
</comment>
<comment type="subunit">
    <text evidence="1">Homodimer.</text>
</comment>
<comment type="similarity">
    <text evidence="1">Belongs to the Nudix hydrolase family. NudC subfamily.</text>
</comment>
<reference key="1">
    <citation type="journal article" date="2006" name="BMC Genomics">
        <title>Complete genome sequence of Shigella flexneri 5b and comparison with Shigella flexneri 2a.</title>
        <authorList>
            <person name="Nie H."/>
            <person name="Yang F."/>
            <person name="Zhang X."/>
            <person name="Yang J."/>
            <person name="Chen L."/>
            <person name="Wang J."/>
            <person name="Xiong Z."/>
            <person name="Peng J."/>
            <person name="Sun L."/>
            <person name="Dong J."/>
            <person name="Xue Y."/>
            <person name="Xu X."/>
            <person name="Chen S."/>
            <person name="Yao Z."/>
            <person name="Shen Y."/>
            <person name="Jin Q."/>
        </authorList>
    </citation>
    <scope>NUCLEOTIDE SEQUENCE [LARGE SCALE GENOMIC DNA]</scope>
    <source>
        <strain>8401</strain>
    </source>
</reference>
<name>NUDC_SHIF8</name>
<protein>
    <recommendedName>
        <fullName evidence="1">NAD-capped RNA hydrolase NudC</fullName>
        <shortName evidence="1">DeNADding enzyme NudC</shortName>
        <ecNumber evidence="1">3.6.1.-</ecNumber>
    </recommendedName>
    <alternativeName>
        <fullName evidence="1">NADH pyrophosphatase</fullName>
        <ecNumber evidence="1">3.6.1.22</ecNumber>
    </alternativeName>
</protein>
<evidence type="ECO:0000255" key="1">
    <source>
        <dbReference type="HAMAP-Rule" id="MF_00297"/>
    </source>
</evidence>
<keyword id="KW-0378">Hydrolase</keyword>
<keyword id="KW-0460">Magnesium</keyword>
<keyword id="KW-0464">Manganese</keyword>
<keyword id="KW-0479">Metal-binding</keyword>
<keyword id="KW-0520">NAD</keyword>
<keyword id="KW-0862">Zinc</keyword>
<sequence>MDRIIEKLDHGWWVVSHEQKLWLPKGELPYGEAANFDLVGQRALQIGEWQGEPVWLIQQQRRHDMGSVRQVIDLDVGLFQLAGRGVQLAEFYRSHKYCGYCGHEMYPSKTEWAMLCSHCRERYYPQIAPCIIVAIRRDDSILLAQHTRHRNGVHTVLAGFVEVGETLEQAVAREVMEESGIKVKNLRYVTSQPWPFPQSLMTAFMAEYDSGDIVIDPKELLEANWYRYDDLPLLPPPGTVARRLIEDTVAMCRAEYE</sequence>
<organism>
    <name type="scientific">Shigella flexneri serotype 5b (strain 8401)</name>
    <dbReference type="NCBI Taxonomy" id="373384"/>
    <lineage>
        <taxon>Bacteria</taxon>
        <taxon>Pseudomonadati</taxon>
        <taxon>Pseudomonadota</taxon>
        <taxon>Gammaproteobacteria</taxon>
        <taxon>Enterobacterales</taxon>
        <taxon>Enterobacteriaceae</taxon>
        <taxon>Shigella</taxon>
    </lineage>
</organism>
<dbReference type="EC" id="3.6.1.-" evidence="1"/>
<dbReference type="EC" id="3.6.1.22" evidence="1"/>
<dbReference type="EMBL" id="CP000266">
    <property type="protein sequence ID" value="ABF06061.1"/>
    <property type="molecule type" value="Genomic_DNA"/>
</dbReference>
<dbReference type="RefSeq" id="WP_000373929.1">
    <property type="nucleotide sequence ID" value="NC_008258.1"/>
</dbReference>
<dbReference type="SMR" id="Q0SY04"/>
<dbReference type="GeneID" id="75169442"/>
<dbReference type="KEGG" id="sfv:SFV_4068"/>
<dbReference type="HOGENOM" id="CLU_037162_0_1_6"/>
<dbReference type="Proteomes" id="UP000000659">
    <property type="component" value="Chromosome"/>
</dbReference>
<dbReference type="GO" id="GO:0005829">
    <property type="term" value="C:cytosol"/>
    <property type="evidence" value="ECO:0007669"/>
    <property type="project" value="TreeGrafter"/>
</dbReference>
<dbReference type="GO" id="GO:0000287">
    <property type="term" value="F:magnesium ion binding"/>
    <property type="evidence" value="ECO:0007669"/>
    <property type="project" value="UniProtKB-UniRule"/>
</dbReference>
<dbReference type="GO" id="GO:0030145">
    <property type="term" value="F:manganese ion binding"/>
    <property type="evidence" value="ECO:0007669"/>
    <property type="project" value="UniProtKB-UniRule"/>
</dbReference>
<dbReference type="GO" id="GO:0000210">
    <property type="term" value="F:NAD+ diphosphatase activity"/>
    <property type="evidence" value="ECO:0007669"/>
    <property type="project" value="UniProtKB-UniRule"/>
</dbReference>
<dbReference type="GO" id="GO:0035529">
    <property type="term" value="F:NADH pyrophosphatase activity"/>
    <property type="evidence" value="ECO:0007669"/>
    <property type="project" value="TreeGrafter"/>
</dbReference>
<dbReference type="GO" id="GO:0110153">
    <property type="term" value="F:RNA NAD-cap (NMN-forming) hydrolase activity"/>
    <property type="evidence" value="ECO:0007669"/>
    <property type="project" value="RHEA"/>
</dbReference>
<dbReference type="GO" id="GO:0008270">
    <property type="term" value="F:zinc ion binding"/>
    <property type="evidence" value="ECO:0007669"/>
    <property type="project" value="UniProtKB-UniRule"/>
</dbReference>
<dbReference type="GO" id="GO:0019677">
    <property type="term" value="P:NAD catabolic process"/>
    <property type="evidence" value="ECO:0007669"/>
    <property type="project" value="TreeGrafter"/>
</dbReference>
<dbReference type="GO" id="GO:0006734">
    <property type="term" value="P:NADH metabolic process"/>
    <property type="evidence" value="ECO:0007669"/>
    <property type="project" value="TreeGrafter"/>
</dbReference>
<dbReference type="GO" id="GO:0006742">
    <property type="term" value="P:NADP catabolic process"/>
    <property type="evidence" value="ECO:0007669"/>
    <property type="project" value="TreeGrafter"/>
</dbReference>
<dbReference type="CDD" id="cd03429">
    <property type="entry name" value="NUDIX_NADH_pyrophosphatase_Nudt13"/>
    <property type="match status" value="1"/>
</dbReference>
<dbReference type="FunFam" id="3.90.79.10:FF:000004">
    <property type="entry name" value="NADH pyrophosphatase"/>
    <property type="match status" value="1"/>
</dbReference>
<dbReference type="FunFam" id="3.90.79.20:FF:000001">
    <property type="entry name" value="NADH pyrophosphatase"/>
    <property type="match status" value="1"/>
</dbReference>
<dbReference type="Gene3D" id="3.90.79.20">
    <property type="match status" value="1"/>
</dbReference>
<dbReference type="Gene3D" id="3.90.79.10">
    <property type="entry name" value="Nucleoside Triphosphate Pyrophosphohydrolase"/>
    <property type="match status" value="1"/>
</dbReference>
<dbReference type="HAMAP" id="MF_00297">
    <property type="entry name" value="Nudix_NudC"/>
    <property type="match status" value="1"/>
</dbReference>
<dbReference type="InterPro" id="IPR050241">
    <property type="entry name" value="NAD-cap_RNA_hydrolase_NudC"/>
</dbReference>
<dbReference type="InterPro" id="IPR049734">
    <property type="entry name" value="NudC-like_C"/>
</dbReference>
<dbReference type="InterPro" id="IPR015797">
    <property type="entry name" value="NUDIX_hydrolase-like_dom_sf"/>
</dbReference>
<dbReference type="InterPro" id="IPR020084">
    <property type="entry name" value="NUDIX_hydrolase_CS"/>
</dbReference>
<dbReference type="InterPro" id="IPR000086">
    <property type="entry name" value="NUDIX_hydrolase_dom"/>
</dbReference>
<dbReference type="InterPro" id="IPR022925">
    <property type="entry name" value="RNA_Hydrolase_NudC"/>
</dbReference>
<dbReference type="InterPro" id="IPR015376">
    <property type="entry name" value="Znr_NADH_PPase"/>
</dbReference>
<dbReference type="NCBIfam" id="NF001299">
    <property type="entry name" value="PRK00241.1"/>
    <property type="match status" value="1"/>
</dbReference>
<dbReference type="PANTHER" id="PTHR42904:SF6">
    <property type="entry name" value="NAD-CAPPED RNA HYDROLASE NUDT12"/>
    <property type="match status" value="1"/>
</dbReference>
<dbReference type="PANTHER" id="PTHR42904">
    <property type="entry name" value="NUDIX HYDROLASE, NUDC SUBFAMILY"/>
    <property type="match status" value="1"/>
</dbReference>
<dbReference type="Pfam" id="PF00293">
    <property type="entry name" value="NUDIX"/>
    <property type="match status" value="1"/>
</dbReference>
<dbReference type="Pfam" id="PF09297">
    <property type="entry name" value="Zn_ribbon_NUD"/>
    <property type="match status" value="1"/>
</dbReference>
<dbReference type="SUPFAM" id="SSF55811">
    <property type="entry name" value="Nudix"/>
    <property type="match status" value="2"/>
</dbReference>
<dbReference type="PROSITE" id="PS51462">
    <property type="entry name" value="NUDIX"/>
    <property type="match status" value="1"/>
</dbReference>
<dbReference type="PROSITE" id="PS00893">
    <property type="entry name" value="NUDIX_BOX"/>
    <property type="match status" value="1"/>
</dbReference>